<name>NTF3_TROHA</name>
<proteinExistence type="inferred from homology"/>
<comment type="function">
    <text evidence="1">Seems to promote the survival of visceral and proprioceptive sensory neurons.</text>
</comment>
<comment type="subcellular location">
    <subcellularLocation>
        <location evidence="1">Secreted</location>
    </subcellularLocation>
</comment>
<comment type="similarity">
    <text evidence="3">Belongs to the NGF-beta family.</text>
</comment>
<dbReference type="EMBL" id="AY988056">
    <property type="protein sequence ID" value="AAY44263.1"/>
    <property type="molecule type" value="Genomic_DNA"/>
</dbReference>
<dbReference type="GO" id="GO:0030424">
    <property type="term" value="C:axon"/>
    <property type="evidence" value="ECO:0007669"/>
    <property type="project" value="TreeGrafter"/>
</dbReference>
<dbReference type="GO" id="GO:0030425">
    <property type="term" value="C:dendrite"/>
    <property type="evidence" value="ECO:0007669"/>
    <property type="project" value="TreeGrafter"/>
</dbReference>
<dbReference type="GO" id="GO:0005615">
    <property type="term" value="C:extracellular space"/>
    <property type="evidence" value="ECO:0007669"/>
    <property type="project" value="TreeGrafter"/>
</dbReference>
<dbReference type="GO" id="GO:0008021">
    <property type="term" value="C:synaptic vesicle"/>
    <property type="evidence" value="ECO:0007669"/>
    <property type="project" value="TreeGrafter"/>
</dbReference>
<dbReference type="GO" id="GO:0008083">
    <property type="term" value="F:growth factor activity"/>
    <property type="evidence" value="ECO:0007669"/>
    <property type="project" value="UniProtKB-KW"/>
</dbReference>
<dbReference type="GO" id="GO:0005163">
    <property type="term" value="F:nerve growth factor receptor binding"/>
    <property type="evidence" value="ECO:0007669"/>
    <property type="project" value="TreeGrafter"/>
</dbReference>
<dbReference type="GO" id="GO:0007169">
    <property type="term" value="P:cell surface receptor protein tyrosine kinase signaling pathway"/>
    <property type="evidence" value="ECO:0007669"/>
    <property type="project" value="TreeGrafter"/>
</dbReference>
<dbReference type="GO" id="GO:0050804">
    <property type="term" value="P:modulation of chemical synaptic transmission"/>
    <property type="evidence" value="ECO:0007669"/>
    <property type="project" value="TreeGrafter"/>
</dbReference>
<dbReference type="GO" id="GO:0043524">
    <property type="term" value="P:negative regulation of neuron apoptotic process"/>
    <property type="evidence" value="ECO:0007669"/>
    <property type="project" value="TreeGrafter"/>
</dbReference>
<dbReference type="GO" id="GO:0021675">
    <property type="term" value="P:nerve development"/>
    <property type="evidence" value="ECO:0007669"/>
    <property type="project" value="TreeGrafter"/>
</dbReference>
<dbReference type="GO" id="GO:0038180">
    <property type="term" value="P:nerve growth factor signaling pathway"/>
    <property type="evidence" value="ECO:0007669"/>
    <property type="project" value="TreeGrafter"/>
</dbReference>
<dbReference type="GO" id="GO:0048812">
    <property type="term" value="P:neuron projection morphogenesis"/>
    <property type="evidence" value="ECO:0007669"/>
    <property type="project" value="TreeGrafter"/>
</dbReference>
<dbReference type="Gene3D" id="2.10.90.10">
    <property type="entry name" value="Cystine-knot cytokines"/>
    <property type="match status" value="1"/>
</dbReference>
<dbReference type="InterPro" id="IPR029034">
    <property type="entry name" value="Cystine-knot_cytokine"/>
</dbReference>
<dbReference type="InterPro" id="IPR020408">
    <property type="entry name" value="Nerve_growth_factor-like"/>
</dbReference>
<dbReference type="InterPro" id="IPR002072">
    <property type="entry name" value="Nerve_growth_factor-rel"/>
</dbReference>
<dbReference type="InterPro" id="IPR045815">
    <property type="entry name" value="NTF3_N"/>
</dbReference>
<dbReference type="PANTHER" id="PTHR11589">
    <property type="entry name" value="NERVE GROWTH FACTOR NGF -RELATED"/>
    <property type="match status" value="1"/>
</dbReference>
<dbReference type="PANTHER" id="PTHR11589:SF4">
    <property type="entry name" value="NEUROTROPHIN-3"/>
    <property type="match status" value="1"/>
</dbReference>
<dbReference type="Pfam" id="PF00243">
    <property type="entry name" value="NGF"/>
    <property type="match status" value="1"/>
</dbReference>
<dbReference type="Pfam" id="PF19338">
    <property type="entry name" value="NTF3_N"/>
    <property type="match status" value="1"/>
</dbReference>
<dbReference type="SMART" id="SM00140">
    <property type="entry name" value="NGF"/>
    <property type="match status" value="1"/>
</dbReference>
<dbReference type="SUPFAM" id="SSF57501">
    <property type="entry name" value="Cystine-knot cytokines"/>
    <property type="match status" value="1"/>
</dbReference>
<dbReference type="PROSITE" id="PS50270">
    <property type="entry name" value="NGF_2"/>
    <property type="match status" value="1"/>
</dbReference>
<feature type="signal peptide" evidence="2">
    <location>
        <begin position="1" status="less than"/>
        <end position="3"/>
    </location>
</feature>
<feature type="propeptide" id="PRO_0000346747" evidence="1">
    <location>
        <begin position="4"/>
        <end position="119"/>
    </location>
</feature>
<feature type="chain" id="PRO_0000346748" description="Neurotrophin-3">
    <location>
        <begin position="120"/>
        <end position="165" status="greater than"/>
    </location>
</feature>
<feature type="non-terminal residue">
    <location>
        <position position="1"/>
    </location>
</feature>
<feature type="non-terminal residue">
    <location>
        <position position="165"/>
    </location>
</feature>
<reference key="1">
    <citation type="journal article" date="2006" name="Mol. Phylogenet. Evol.">
        <title>Dispersal and vicariance: the complex evolutionary history of boid snakes.</title>
        <authorList>
            <person name="Noonan B.P."/>
            <person name="Chippindale P.T."/>
        </authorList>
    </citation>
    <scope>NUCLEOTIDE SEQUENCE [GENOMIC DNA]</scope>
</reference>
<organism>
    <name type="scientific">Tropidophis haetianus</name>
    <name type="common">Haitian dwarf boa</name>
    <dbReference type="NCBI Taxonomy" id="51980"/>
    <lineage>
        <taxon>Eukaryota</taxon>
        <taxon>Metazoa</taxon>
        <taxon>Chordata</taxon>
        <taxon>Craniata</taxon>
        <taxon>Vertebrata</taxon>
        <taxon>Euteleostomi</taxon>
        <taxon>Lepidosauria</taxon>
        <taxon>Squamata</taxon>
        <taxon>Bifurcata</taxon>
        <taxon>Unidentata</taxon>
        <taxon>Episquamata</taxon>
        <taxon>Toxicofera</taxon>
        <taxon>Serpentes</taxon>
        <taxon>Henophidia</taxon>
        <taxon>Tropidophiidae</taxon>
        <taxon>Tropidophis</taxon>
    </lineage>
</organism>
<protein>
    <recommendedName>
        <fullName>Neurotrophin-3</fullName>
        <shortName>NT-3</shortName>
    </recommendedName>
</protein>
<gene>
    <name type="primary">NTF3</name>
</gene>
<sequence length="165" mass="18527">IQSTSMDQGSLSEDSMNSFIRTLIQAGIWKNKVLRQTARTMDGIETTXKXTXAEPXVIAXKDIRLGFQSIVSVDAELLRQQRRFSSPRVLXNENTPLEPPPLYLMEEPMVLTXTSXXXRFAXXXXHRGEYSVCDSESRWVTDKSSAVDIRGHQVTVLGEIRMGPS</sequence>
<accession>Q1X6Y2</accession>
<evidence type="ECO:0000250" key="1"/>
<evidence type="ECO:0000255" key="2"/>
<evidence type="ECO:0000305" key="3"/>
<keyword id="KW-0165">Cleavage on pair of basic residues</keyword>
<keyword id="KW-0339">Growth factor</keyword>
<keyword id="KW-0964">Secreted</keyword>
<keyword id="KW-0732">Signal</keyword>